<feature type="chain" id="PRO_1000047725" description="Aminomethyltransferase">
    <location>
        <begin position="1"/>
        <end position="364"/>
    </location>
</feature>
<protein>
    <recommendedName>
        <fullName evidence="1">Aminomethyltransferase</fullName>
        <ecNumber evidence="1">2.1.2.10</ecNumber>
    </recommendedName>
    <alternativeName>
        <fullName evidence="1">Glycine cleavage system T protein</fullName>
    </alternativeName>
</protein>
<comment type="function">
    <text evidence="1">The glycine cleavage system catalyzes the degradation of glycine.</text>
</comment>
<comment type="catalytic activity">
    <reaction evidence="1">
        <text>N(6)-[(R)-S(8)-aminomethyldihydrolipoyl]-L-lysyl-[protein] + (6S)-5,6,7,8-tetrahydrofolate = N(6)-[(R)-dihydrolipoyl]-L-lysyl-[protein] + (6R)-5,10-methylene-5,6,7,8-tetrahydrofolate + NH4(+)</text>
        <dbReference type="Rhea" id="RHEA:16945"/>
        <dbReference type="Rhea" id="RHEA-COMP:10475"/>
        <dbReference type="Rhea" id="RHEA-COMP:10492"/>
        <dbReference type="ChEBI" id="CHEBI:15636"/>
        <dbReference type="ChEBI" id="CHEBI:28938"/>
        <dbReference type="ChEBI" id="CHEBI:57453"/>
        <dbReference type="ChEBI" id="CHEBI:83100"/>
        <dbReference type="ChEBI" id="CHEBI:83143"/>
        <dbReference type="EC" id="2.1.2.10"/>
    </reaction>
</comment>
<comment type="subunit">
    <text evidence="1">The glycine cleavage system is composed of four proteins: P, T, L and H.</text>
</comment>
<comment type="similarity">
    <text evidence="1">Belongs to the GcvT family.</text>
</comment>
<name>GCST_THEP1</name>
<sequence>MKRTPLFEKHVGLGAKMVDFAGWEMPLYYTSIFEEVMAVRKSVGMFDVSHMGEFLVKGPEAVSFIDFLITNDFSSLPDGKAIYSVMCNENGGIIDDLVVYKVSPDEALMVVNAANIEKDFNWIKSHSKNFDVEILNISDTTALIAFQGPEAQETLQELVEDSLEEIAYYSFRKSIVAGVEALVSRTGYTGEDGFELMLEAKDAPKVWDALMNLLRKIDGRPAGLGARDVCRLEATYLLYGQDMDESTNPLEVGLSWVVKLDKDFVGKEALLKAKEKVERKLVALELSGKRIARKGYEVLKNGERVGEITSGNFSPTLGKSIALALVSKSVKVGDQLEVAFPGGKLVEALVVKKPFYRGSVRREV</sequence>
<keyword id="KW-0032">Aminotransferase</keyword>
<keyword id="KW-0808">Transferase</keyword>
<dbReference type="EC" id="2.1.2.10" evidence="1"/>
<dbReference type="EMBL" id="CP000702">
    <property type="protein sequence ID" value="ABQ46733.1"/>
    <property type="molecule type" value="Genomic_DNA"/>
</dbReference>
<dbReference type="RefSeq" id="WP_011943317.1">
    <property type="nucleotide sequence ID" value="NC_009486.1"/>
</dbReference>
<dbReference type="SMR" id="A5IKL0"/>
<dbReference type="STRING" id="390874.Tpet_0713"/>
<dbReference type="KEGG" id="tpt:Tpet_0713"/>
<dbReference type="eggNOG" id="COG0404">
    <property type="taxonomic scope" value="Bacteria"/>
</dbReference>
<dbReference type="HOGENOM" id="CLU_007884_10_2_0"/>
<dbReference type="Proteomes" id="UP000006558">
    <property type="component" value="Chromosome"/>
</dbReference>
<dbReference type="GO" id="GO:0005829">
    <property type="term" value="C:cytosol"/>
    <property type="evidence" value="ECO:0007669"/>
    <property type="project" value="TreeGrafter"/>
</dbReference>
<dbReference type="GO" id="GO:0005960">
    <property type="term" value="C:glycine cleavage complex"/>
    <property type="evidence" value="ECO:0007669"/>
    <property type="project" value="InterPro"/>
</dbReference>
<dbReference type="GO" id="GO:0004047">
    <property type="term" value="F:aminomethyltransferase activity"/>
    <property type="evidence" value="ECO:0007669"/>
    <property type="project" value="UniProtKB-UniRule"/>
</dbReference>
<dbReference type="GO" id="GO:0008483">
    <property type="term" value="F:transaminase activity"/>
    <property type="evidence" value="ECO:0007669"/>
    <property type="project" value="UniProtKB-KW"/>
</dbReference>
<dbReference type="GO" id="GO:0019464">
    <property type="term" value="P:glycine decarboxylation via glycine cleavage system"/>
    <property type="evidence" value="ECO:0007669"/>
    <property type="project" value="UniProtKB-UniRule"/>
</dbReference>
<dbReference type="FunFam" id="2.40.30.110:FF:000003">
    <property type="entry name" value="Aminomethyltransferase"/>
    <property type="match status" value="1"/>
</dbReference>
<dbReference type="FunFam" id="3.30.70.1400:FF:000001">
    <property type="entry name" value="Aminomethyltransferase"/>
    <property type="match status" value="1"/>
</dbReference>
<dbReference type="FunFam" id="4.10.1250.10:FF:000001">
    <property type="entry name" value="Aminomethyltransferase"/>
    <property type="match status" value="1"/>
</dbReference>
<dbReference type="Gene3D" id="2.40.30.110">
    <property type="entry name" value="Aminomethyltransferase beta-barrel domains"/>
    <property type="match status" value="1"/>
</dbReference>
<dbReference type="Gene3D" id="3.30.70.1400">
    <property type="entry name" value="Aminomethyltransferase beta-barrel domains"/>
    <property type="match status" value="1"/>
</dbReference>
<dbReference type="Gene3D" id="4.10.1250.10">
    <property type="entry name" value="Aminomethyltransferase fragment"/>
    <property type="match status" value="1"/>
</dbReference>
<dbReference type="Gene3D" id="3.30.1360.120">
    <property type="entry name" value="Probable tRNA modification gtpase trme, domain 1"/>
    <property type="match status" value="1"/>
</dbReference>
<dbReference type="HAMAP" id="MF_00259">
    <property type="entry name" value="GcvT"/>
    <property type="match status" value="1"/>
</dbReference>
<dbReference type="InterPro" id="IPR006223">
    <property type="entry name" value="GCS_T"/>
</dbReference>
<dbReference type="InterPro" id="IPR022903">
    <property type="entry name" value="GCS_T_bac"/>
</dbReference>
<dbReference type="InterPro" id="IPR013977">
    <property type="entry name" value="GCST_C"/>
</dbReference>
<dbReference type="InterPro" id="IPR006222">
    <property type="entry name" value="GCV_T_N"/>
</dbReference>
<dbReference type="InterPro" id="IPR028896">
    <property type="entry name" value="GcvT/YgfZ/DmdA"/>
</dbReference>
<dbReference type="InterPro" id="IPR029043">
    <property type="entry name" value="GcvT/YgfZ_C"/>
</dbReference>
<dbReference type="InterPro" id="IPR027266">
    <property type="entry name" value="TrmE/GcvT_dom1"/>
</dbReference>
<dbReference type="NCBIfam" id="TIGR00528">
    <property type="entry name" value="gcvT"/>
    <property type="match status" value="1"/>
</dbReference>
<dbReference type="NCBIfam" id="NF001567">
    <property type="entry name" value="PRK00389.1"/>
    <property type="match status" value="1"/>
</dbReference>
<dbReference type="PANTHER" id="PTHR43757">
    <property type="entry name" value="AMINOMETHYLTRANSFERASE"/>
    <property type="match status" value="1"/>
</dbReference>
<dbReference type="PANTHER" id="PTHR43757:SF2">
    <property type="entry name" value="AMINOMETHYLTRANSFERASE, MITOCHONDRIAL"/>
    <property type="match status" value="1"/>
</dbReference>
<dbReference type="Pfam" id="PF01571">
    <property type="entry name" value="GCV_T"/>
    <property type="match status" value="1"/>
</dbReference>
<dbReference type="Pfam" id="PF08669">
    <property type="entry name" value="GCV_T_C"/>
    <property type="match status" value="1"/>
</dbReference>
<dbReference type="PIRSF" id="PIRSF006487">
    <property type="entry name" value="GcvT"/>
    <property type="match status" value="1"/>
</dbReference>
<dbReference type="SUPFAM" id="SSF101790">
    <property type="entry name" value="Aminomethyltransferase beta-barrel domain"/>
    <property type="match status" value="1"/>
</dbReference>
<dbReference type="SUPFAM" id="SSF103025">
    <property type="entry name" value="Folate-binding domain"/>
    <property type="match status" value="1"/>
</dbReference>
<gene>
    <name evidence="1" type="primary">gcvT</name>
    <name type="ordered locus">Tpet_0713</name>
</gene>
<organism>
    <name type="scientific">Thermotoga petrophila (strain ATCC BAA-488 / DSM 13995 / JCM 10881 / RKU-1)</name>
    <dbReference type="NCBI Taxonomy" id="390874"/>
    <lineage>
        <taxon>Bacteria</taxon>
        <taxon>Thermotogati</taxon>
        <taxon>Thermotogota</taxon>
        <taxon>Thermotogae</taxon>
        <taxon>Thermotogales</taxon>
        <taxon>Thermotogaceae</taxon>
        <taxon>Thermotoga</taxon>
    </lineage>
</organism>
<reference key="1">
    <citation type="submission" date="2007-05" db="EMBL/GenBank/DDBJ databases">
        <title>Complete sequence of Thermotoga petrophila RKU-1.</title>
        <authorList>
            <consortium name="US DOE Joint Genome Institute"/>
            <person name="Copeland A."/>
            <person name="Lucas S."/>
            <person name="Lapidus A."/>
            <person name="Barry K."/>
            <person name="Glavina del Rio T."/>
            <person name="Dalin E."/>
            <person name="Tice H."/>
            <person name="Pitluck S."/>
            <person name="Sims D."/>
            <person name="Brettin T."/>
            <person name="Bruce D."/>
            <person name="Detter J.C."/>
            <person name="Han C."/>
            <person name="Tapia R."/>
            <person name="Schmutz J."/>
            <person name="Larimer F."/>
            <person name="Land M."/>
            <person name="Hauser L."/>
            <person name="Kyrpides N."/>
            <person name="Mikhailova N."/>
            <person name="Nelson K."/>
            <person name="Gogarten J.P."/>
            <person name="Noll K."/>
            <person name="Richardson P."/>
        </authorList>
    </citation>
    <scope>NUCLEOTIDE SEQUENCE [LARGE SCALE GENOMIC DNA]</scope>
    <source>
        <strain>ATCC BAA-488 / DSM 13995 / JCM 10881 / RKU-1</strain>
    </source>
</reference>
<proteinExistence type="inferred from homology"/>
<evidence type="ECO:0000255" key="1">
    <source>
        <dbReference type="HAMAP-Rule" id="MF_00259"/>
    </source>
</evidence>
<accession>A5IKL0</accession>